<evidence type="ECO:0000255" key="1"/>
<evidence type="ECO:0000305" key="2"/>
<feature type="chain" id="PRO_0000405646" description="Altered inheritance of mitochondria protein 11">
    <location>
        <begin position="1"/>
        <end position="155"/>
    </location>
</feature>
<feature type="transmembrane region" description="Helical" evidence="1">
    <location>
        <begin position="27"/>
        <end position="44"/>
    </location>
</feature>
<feature type="transmembrane region" description="Helical" evidence="1">
    <location>
        <begin position="77"/>
        <end position="99"/>
    </location>
</feature>
<reference key="1">
    <citation type="journal article" date="2009" name="Nature">
        <title>Evolution of pathogenicity and sexual reproduction in eight Candida genomes.</title>
        <authorList>
            <person name="Butler G."/>
            <person name="Rasmussen M.D."/>
            <person name="Lin M.F."/>
            <person name="Santos M.A.S."/>
            <person name="Sakthikumar S."/>
            <person name="Munro C.A."/>
            <person name="Rheinbay E."/>
            <person name="Grabherr M."/>
            <person name="Forche A."/>
            <person name="Reedy J.L."/>
            <person name="Agrafioti I."/>
            <person name="Arnaud M.B."/>
            <person name="Bates S."/>
            <person name="Brown A.J.P."/>
            <person name="Brunke S."/>
            <person name="Costanzo M.C."/>
            <person name="Fitzpatrick D.A."/>
            <person name="de Groot P.W.J."/>
            <person name="Harris D."/>
            <person name="Hoyer L.L."/>
            <person name="Hube B."/>
            <person name="Klis F.M."/>
            <person name="Kodira C."/>
            <person name="Lennard N."/>
            <person name="Logue M.E."/>
            <person name="Martin R."/>
            <person name="Neiman A.M."/>
            <person name="Nikolaou E."/>
            <person name="Quail M.A."/>
            <person name="Quinn J."/>
            <person name="Santos M.C."/>
            <person name="Schmitzberger F.F."/>
            <person name="Sherlock G."/>
            <person name="Shah P."/>
            <person name="Silverstein K.A.T."/>
            <person name="Skrzypek M.S."/>
            <person name="Soll D."/>
            <person name="Staggs R."/>
            <person name="Stansfield I."/>
            <person name="Stumpf M.P.H."/>
            <person name="Sudbery P.E."/>
            <person name="Srikantha T."/>
            <person name="Zeng Q."/>
            <person name="Berman J."/>
            <person name="Berriman M."/>
            <person name="Heitman J."/>
            <person name="Gow N.A.R."/>
            <person name="Lorenz M.C."/>
            <person name="Birren B.W."/>
            <person name="Kellis M."/>
            <person name="Cuomo C.A."/>
        </authorList>
    </citation>
    <scope>NUCLEOTIDE SEQUENCE [LARGE SCALE GENOMIC DNA]</scope>
    <source>
        <strain>ATCC 42720</strain>
    </source>
</reference>
<accession>C4XZH2</accession>
<sequence length="155" mass="17389">MDLLRQYNFKIADASPEYLERRKKQAVLFMTAAAVTIFTSRFAYKSTITRQYIPTLFQGNHSPPLGYNFTSDAAVAVGTGTMLCASVSSMICFGTCWVLDVSTFREFGWKMKSLMGGTQKEQELADMPMDEDSAYIQDGLNDILDGKVELNFDDE</sequence>
<gene>
    <name type="primary">AIM11</name>
    <name type="ORF">CLUG_01354</name>
</gene>
<protein>
    <recommendedName>
        <fullName>Altered inheritance of mitochondria protein 11</fullName>
    </recommendedName>
</protein>
<keyword id="KW-0472">Membrane</keyword>
<keyword id="KW-1185">Reference proteome</keyword>
<keyword id="KW-0812">Transmembrane</keyword>
<keyword id="KW-1133">Transmembrane helix</keyword>
<comment type="subcellular location">
    <subcellularLocation>
        <location evidence="2">Membrane</location>
        <topology evidence="2">Multi-pass membrane protein</topology>
    </subcellularLocation>
</comment>
<comment type="similarity">
    <text evidence="2">Belongs to the AIM11 family.</text>
</comment>
<proteinExistence type="inferred from homology"/>
<dbReference type="EMBL" id="CH408077">
    <property type="protein sequence ID" value="EEQ37231.1"/>
    <property type="molecule type" value="Genomic_DNA"/>
</dbReference>
<dbReference type="RefSeq" id="XP_002617895.1">
    <property type="nucleotide sequence ID" value="XM_002617849.1"/>
</dbReference>
<dbReference type="FunCoup" id="C4XZH2">
    <property type="interactions" value="27"/>
</dbReference>
<dbReference type="GeneID" id="8499043"/>
<dbReference type="KEGG" id="clu:CLUG_01354"/>
<dbReference type="VEuPathDB" id="FungiDB:CLUG_01354"/>
<dbReference type="HOGENOM" id="CLU_118700_0_0_1"/>
<dbReference type="InParanoid" id="C4XZH2"/>
<dbReference type="OMA" id="RFAYKST"/>
<dbReference type="OrthoDB" id="118613at4891"/>
<dbReference type="Proteomes" id="UP000007703">
    <property type="component" value="Unassembled WGS sequence"/>
</dbReference>
<dbReference type="GO" id="GO:0016020">
    <property type="term" value="C:membrane"/>
    <property type="evidence" value="ECO:0007669"/>
    <property type="project" value="UniProtKB-SubCell"/>
</dbReference>
<dbReference type="GO" id="GO:0005739">
    <property type="term" value="C:mitochondrion"/>
    <property type="evidence" value="ECO:0007669"/>
    <property type="project" value="TreeGrafter"/>
</dbReference>
<dbReference type="InterPro" id="IPR038814">
    <property type="entry name" value="AIM11"/>
</dbReference>
<dbReference type="PANTHER" id="PTHR39136">
    <property type="entry name" value="ALTERED INHERITANCE OF MITOCHONDRIA PROTEIN 11"/>
    <property type="match status" value="1"/>
</dbReference>
<dbReference type="PANTHER" id="PTHR39136:SF1">
    <property type="entry name" value="ALTERED INHERITANCE OF MITOCHONDRIA PROTEIN 11"/>
    <property type="match status" value="1"/>
</dbReference>
<name>AIM11_CLAL4</name>
<organism>
    <name type="scientific">Clavispora lusitaniae (strain ATCC 42720)</name>
    <name type="common">Yeast</name>
    <name type="synonym">Candida lusitaniae</name>
    <dbReference type="NCBI Taxonomy" id="306902"/>
    <lineage>
        <taxon>Eukaryota</taxon>
        <taxon>Fungi</taxon>
        <taxon>Dikarya</taxon>
        <taxon>Ascomycota</taxon>
        <taxon>Saccharomycotina</taxon>
        <taxon>Pichiomycetes</taxon>
        <taxon>Metschnikowiaceae</taxon>
        <taxon>Clavispora</taxon>
    </lineage>
</organism>